<gene>
    <name type="primary">nop16</name>
    <name type="ORF">AFUA_2G01480</name>
</gene>
<protein>
    <recommendedName>
        <fullName>Nucleolar protein 16</fullName>
    </recommendedName>
</protein>
<accession>Q4WIK9</accession>
<dbReference type="EMBL" id="AAHF01000008">
    <property type="protein sequence ID" value="EAL87246.1"/>
    <property type="molecule type" value="Genomic_DNA"/>
</dbReference>
<dbReference type="RefSeq" id="XP_749284.1">
    <property type="nucleotide sequence ID" value="XM_744191.1"/>
</dbReference>
<dbReference type="SMR" id="Q4WIK9"/>
<dbReference type="FunCoup" id="Q4WIK9">
    <property type="interactions" value="255"/>
</dbReference>
<dbReference type="STRING" id="330879.Q4WIK9"/>
<dbReference type="EnsemblFungi" id="EAL87246">
    <property type="protein sequence ID" value="EAL87246"/>
    <property type="gene ID" value="AFUA_2G01480"/>
</dbReference>
<dbReference type="GeneID" id="3507209"/>
<dbReference type="KEGG" id="afm:AFUA_2G01480"/>
<dbReference type="VEuPathDB" id="FungiDB:Afu2g01480"/>
<dbReference type="eggNOG" id="KOG4771">
    <property type="taxonomic scope" value="Eukaryota"/>
</dbReference>
<dbReference type="HOGENOM" id="CLU_078857_0_0_1"/>
<dbReference type="InParanoid" id="Q4WIK9"/>
<dbReference type="OMA" id="MQQTEAD"/>
<dbReference type="OrthoDB" id="285729at2759"/>
<dbReference type="Proteomes" id="UP000002530">
    <property type="component" value="Chromosome 2"/>
</dbReference>
<dbReference type="GO" id="GO:0005730">
    <property type="term" value="C:nucleolus"/>
    <property type="evidence" value="ECO:0000318"/>
    <property type="project" value="GO_Central"/>
</dbReference>
<dbReference type="GO" id="GO:0030687">
    <property type="term" value="C:preribosome, large subunit precursor"/>
    <property type="evidence" value="ECO:0007669"/>
    <property type="project" value="EnsemblFungi"/>
</dbReference>
<dbReference type="GO" id="GO:0042273">
    <property type="term" value="P:ribosomal large subunit biogenesis"/>
    <property type="evidence" value="ECO:0000318"/>
    <property type="project" value="GO_Central"/>
</dbReference>
<dbReference type="GO" id="GO:0006364">
    <property type="term" value="P:rRNA processing"/>
    <property type="evidence" value="ECO:0007669"/>
    <property type="project" value="UniProtKB-KW"/>
</dbReference>
<dbReference type="InterPro" id="IPR019002">
    <property type="entry name" value="Ribosome_biogenesis_Nop16"/>
</dbReference>
<dbReference type="PANTHER" id="PTHR13243">
    <property type="entry name" value="HSPC111 PROTEIN-RELATED"/>
    <property type="match status" value="1"/>
</dbReference>
<dbReference type="PANTHER" id="PTHR13243:SF1">
    <property type="entry name" value="NUCLEOLAR PROTEIN 16"/>
    <property type="match status" value="1"/>
</dbReference>
<dbReference type="Pfam" id="PF09420">
    <property type="entry name" value="Nop16"/>
    <property type="match status" value="1"/>
</dbReference>
<comment type="function">
    <text evidence="1">Involved in the biogenesis of the 60S ribosomal subunit.</text>
</comment>
<comment type="subunit">
    <text evidence="1">Component of the pre-66S ribosomal particle.</text>
</comment>
<comment type="subcellular location">
    <subcellularLocation>
        <location evidence="1">Nucleus</location>
        <location evidence="1">Nucleolus</location>
    </subcellularLocation>
</comment>
<comment type="similarity">
    <text evidence="3">Belongs to the NOP16 family.</text>
</comment>
<feature type="chain" id="PRO_0000320367" description="Nucleolar protein 16">
    <location>
        <begin position="1"/>
        <end position="241"/>
    </location>
</feature>
<feature type="region of interest" description="Disordered" evidence="2">
    <location>
        <begin position="1"/>
        <end position="30"/>
    </location>
</feature>
<feature type="region of interest" description="Disordered" evidence="2">
    <location>
        <begin position="64"/>
        <end position="86"/>
    </location>
</feature>
<feature type="region of interest" description="Disordered" evidence="2">
    <location>
        <begin position="92"/>
        <end position="111"/>
    </location>
</feature>
<feature type="region of interest" description="Disordered" evidence="2">
    <location>
        <begin position="130"/>
        <end position="193"/>
    </location>
</feature>
<feature type="region of interest" description="Disordered" evidence="2">
    <location>
        <begin position="211"/>
        <end position="241"/>
    </location>
</feature>
<feature type="compositionally biased region" description="Basic and acidic residues" evidence="2">
    <location>
        <begin position="70"/>
        <end position="86"/>
    </location>
</feature>
<feature type="compositionally biased region" description="Low complexity" evidence="2">
    <location>
        <begin position="93"/>
        <end position="102"/>
    </location>
</feature>
<feature type="compositionally biased region" description="Polar residues" evidence="2">
    <location>
        <begin position="156"/>
        <end position="172"/>
    </location>
</feature>
<feature type="compositionally biased region" description="Basic residues" evidence="2">
    <location>
        <begin position="182"/>
        <end position="191"/>
    </location>
</feature>
<feature type="compositionally biased region" description="Basic residues" evidence="2">
    <location>
        <begin position="230"/>
        <end position="241"/>
    </location>
</feature>
<reference key="1">
    <citation type="journal article" date="2005" name="Nature">
        <title>Genomic sequence of the pathogenic and allergenic filamentous fungus Aspergillus fumigatus.</title>
        <authorList>
            <person name="Nierman W.C."/>
            <person name="Pain A."/>
            <person name="Anderson M.J."/>
            <person name="Wortman J.R."/>
            <person name="Kim H.S."/>
            <person name="Arroyo J."/>
            <person name="Berriman M."/>
            <person name="Abe K."/>
            <person name="Archer D.B."/>
            <person name="Bermejo C."/>
            <person name="Bennett J.W."/>
            <person name="Bowyer P."/>
            <person name="Chen D."/>
            <person name="Collins M."/>
            <person name="Coulsen R."/>
            <person name="Davies R."/>
            <person name="Dyer P.S."/>
            <person name="Farman M.L."/>
            <person name="Fedorova N."/>
            <person name="Fedorova N.D."/>
            <person name="Feldblyum T.V."/>
            <person name="Fischer R."/>
            <person name="Fosker N."/>
            <person name="Fraser A."/>
            <person name="Garcia J.L."/>
            <person name="Garcia M.J."/>
            <person name="Goble A."/>
            <person name="Goldman G.H."/>
            <person name="Gomi K."/>
            <person name="Griffith-Jones S."/>
            <person name="Gwilliam R."/>
            <person name="Haas B.J."/>
            <person name="Haas H."/>
            <person name="Harris D.E."/>
            <person name="Horiuchi H."/>
            <person name="Huang J."/>
            <person name="Humphray S."/>
            <person name="Jimenez J."/>
            <person name="Keller N."/>
            <person name="Khouri H."/>
            <person name="Kitamoto K."/>
            <person name="Kobayashi T."/>
            <person name="Konzack S."/>
            <person name="Kulkarni R."/>
            <person name="Kumagai T."/>
            <person name="Lafton A."/>
            <person name="Latge J.-P."/>
            <person name="Li W."/>
            <person name="Lord A."/>
            <person name="Lu C."/>
            <person name="Majoros W.H."/>
            <person name="May G.S."/>
            <person name="Miller B.L."/>
            <person name="Mohamoud Y."/>
            <person name="Molina M."/>
            <person name="Monod M."/>
            <person name="Mouyna I."/>
            <person name="Mulligan S."/>
            <person name="Murphy L.D."/>
            <person name="O'Neil S."/>
            <person name="Paulsen I."/>
            <person name="Penalva M.A."/>
            <person name="Pertea M."/>
            <person name="Price C."/>
            <person name="Pritchard B.L."/>
            <person name="Quail M.A."/>
            <person name="Rabbinowitsch E."/>
            <person name="Rawlins N."/>
            <person name="Rajandream M.A."/>
            <person name="Reichard U."/>
            <person name="Renauld H."/>
            <person name="Robson G.D."/>
            <person name="Rodriguez de Cordoba S."/>
            <person name="Rodriguez-Pena J.M."/>
            <person name="Ronning C.M."/>
            <person name="Rutter S."/>
            <person name="Salzberg S.L."/>
            <person name="Sanchez M."/>
            <person name="Sanchez-Ferrero J.C."/>
            <person name="Saunders D."/>
            <person name="Seeger K."/>
            <person name="Squares R."/>
            <person name="Squares S."/>
            <person name="Takeuchi M."/>
            <person name="Tekaia F."/>
            <person name="Turner G."/>
            <person name="Vazquez de Aldana C.R."/>
            <person name="Weidman J."/>
            <person name="White O."/>
            <person name="Woodward J.R."/>
            <person name="Yu J.-H."/>
            <person name="Fraser C.M."/>
            <person name="Galagan J.E."/>
            <person name="Asai K."/>
            <person name="Machida M."/>
            <person name="Hall N."/>
            <person name="Barrell B.G."/>
            <person name="Denning D.W."/>
        </authorList>
    </citation>
    <scope>NUCLEOTIDE SEQUENCE [LARGE SCALE GENOMIC DNA]</scope>
    <source>
        <strain>ATCC MYA-4609 / CBS 101355 / FGSC A1100 / Af293</strain>
    </source>
</reference>
<proteinExistence type="inferred from homology"/>
<sequence>MGRVLQKKKNRSSTPKQRPKRTGQLKSGKKKINVLGNAIIAQNWDRKLTLTQNYRRLGLVHKLNAPTGGSEKKPTKDGRIEELPEDPLHIRSSAKASAKQAAMGETRVERDPETGKIIRVIRDEEEIEIAGRKVKPSNPLNDPLNELSEDEAARQPASQRTNAKSAVVQQLERQADQEGKAVKAKKPRHQSKREEEWIMRLIERHGENYSAMARDRKLNPMQQSEGDLKRRIRKWKANHSS</sequence>
<name>NOP16_ASPFU</name>
<evidence type="ECO:0000250" key="1"/>
<evidence type="ECO:0000256" key="2">
    <source>
        <dbReference type="SAM" id="MobiDB-lite"/>
    </source>
</evidence>
<evidence type="ECO:0000305" key="3"/>
<keyword id="KW-0539">Nucleus</keyword>
<keyword id="KW-1185">Reference proteome</keyword>
<keyword id="KW-0687">Ribonucleoprotein</keyword>
<keyword id="KW-0690">Ribosome biogenesis</keyword>
<keyword id="KW-0698">rRNA processing</keyword>
<organism>
    <name type="scientific">Aspergillus fumigatus (strain ATCC MYA-4609 / CBS 101355 / FGSC A1100 / Af293)</name>
    <name type="common">Neosartorya fumigata</name>
    <dbReference type="NCBI Taxonomy" id="330879"/>
    <lineage>
        <taxon>Eukaryota</taxon>
        <taxon>Fungi</taxon>
        <taxon>Dikarya</taxon>
        <taxon>Ascomycota</taxon>
        <taxon>Pezizomycotina</taxon>
        <taxon>Eurotiomycetes</taxon>
        <taxon>Eurotiomycetidae</taxon>
        <taxon>Eurotiales</taxon>
        <taxon>Aspergillaceae</taxon>
        <taxon>Aspergillus</taxon>
        <taxon>Aspergillus subgen. Fumigati</taxon>
    </lineage>
</organism>